<proteinExistence type="inferred from homology"/>
<feature type="chain" id="PRO_1000205107" description="Enolase">
    <location>
        <begin position="1"/>
        <end position="419"/>
    </location>
</feature>
<feature type="active site" description="Proton donor" evidence="1">
    <location>
        <position position="205"/>
    </location>
</feature>
<feature type="active site" description="Proton acceptor" evidence="1">
    <location>
        <position position="334"/>
    </location>
</feature>
<feature type="binding site" evidence="1">
    <location>
        <position position="161"/>
    </location>
    <ligand>
        <name>(2R)-2-phosphoglycerate</name>
        <dbReference type="ChEBI" id="CHEBI:58289"/>
    </ligand>
</feature>
<feature type="binding site" evidence="1">
    <location>
        <position position="240"/>
    </location>
    <ligand>
        <name>Mg(2+)</name>
        <dbReference type="ChEBI" id="CHEBI:18420"/>
    </ligand>
</feature>
<feature type="binding site" evidence="1">
    <location>
        <position position="283"/>
    </location>
    <ligand>
        <name>Mg(2+)</name>
        <dbReference type="ChEBI" id="CHEBI:18420"/>
    </ligand>
</feature>
<feature type="binding site" evidence="1">
    <location>
        <position position="309"/>
    </location>
    <ligand>
        <name>Mg(2+)</name>
        <dbReference type="ChEBI" id="CHEBI:18420"/>
    </ligand>
</feature>
<feature type="binding site" evidence="1">
    <location>
        <position position="334"/>
    </location>
    <ligand>
        <name>(2R)-2-phosphoglycerate</name>
        <dbReference type="ChEBI" id="CHEBI:58289"/>
    </ligand>
</feature>
<feature type="binding site" evidence="1">
    <location>
        <position position="363"/>
    </location>
    <ligand>
        <name>(2R)-2-phosphoglycerate</name>
        <dbReference type="ChEBI" id="CHEBI:58289"/>
    </ligand>
</feature>
<feature type="binding site" evidence="1">
    <location>
        <position position="364"/>
    </location>
    <ligand>
        <name>(2R)-2-phosphoglycerate</name>
        <dbReference type="ChEBI" id="CHEBI:58289"/>
    </ligand>
</feature>
<feature type="binding site" evidence="1">
    <location>
        <position position="385"/>
    </location>
    <ligand>
        <name>(2R)-2-phosphoglycerate</name>
        <dbReference type="ChEBI" id="CHEBI:58289"/>
    </ligand>
</feature>
<protein>
    <recommendedName>
        <fullName evidence="1">Enolase</fullName>
        <ecNumber evidence="1">4.2.1.11</ecNumber>
    </recommendedName>
    <alternativeName>
        <fullName evidence="1">2-phospho-D-glycerate hydro-lyase</fullName>
    </alternativeName>
    <alternativeName>
        <fullName evidence="1">2-phosphoglycerate dehydratase</fullName>
    </alternativeName>
</protein>
<name>ENO_SACI4</name>
<keyword id="KW-0963">Cytoplasm</keyword>
<keyword id="KW-0324">Glycolysis</keyword>
<keyword id="KW-0456">Lyase</keyword>
<keyword id="KW-0460">Magnesium</keyword>
<keyword id="KW-0479">Metal-binding</keyword>
<keyword id="KW-0964">Secreted</keyword>
<organism>
    <name type="scientific">Saccharolobus islandicus (strain M.14.25 / Kamchatka #1)</name>
    <name type="common">Sulfolobus islandicus</name>
    <dbReference type="NCBI Taxonomy" id="427317"/>
    <lineage>
        <taxon>Archaea</taxon>
        <taxon>Thermoproteota</taxon>
        <taxon>Thermoprotei</taxon>
        <taxon>Sulfolobales</taxon>
        <taxon>Sulfolobaceae</taxon>
        <taxon>Saccharolobus</taxon>
    </lineage>
</organism>
<evidence type="ECO:0000255" key="1">
    <source>
        <dbReference type="HAMAP-Rule" id="MF_00318"/>
    </source>
</evidence>
<reference key="1">
    <citation type="journal article" date="2009" name="Proc. Natl. Acad. Sci. U.S.A.">
        <title>Biogeography of the Sulfolobus islandicus pan-genome.</title>
        <authorList>
            <person name="Reno M.L."/>
            <person name="Held N.L."/>
            <person name="Fields C.J."/>
            <person name="Burke P.V."/>
            <person name="Whitaker R.J."/>
        </authorList>
    </citation>
    <scope>NUCLEOTIDE SEQUENCE [LARGE SCALE GENOMIC DNA]</scope>
    <source>
        <strain>M.14.25 / Kamchatka #1</strain>
    </source>
</reference>
<sequence>MINRFSIEKVKGLEIIDSRGNPTIRVFVRTNDGVESFGDAPAGASKGTREAIEVRDENGLTVKRAVDIANYIIDPALHGIDVREQGIIDKILIDIDSTENKSKLGGNTIIATSIAALKTASKALGLEVFKYIAGPRLPKIPIPLLNIINGGLHAGNKLKIQEFIVLPIKFNTFKEAFFAAIEVYRNLKGLISERYGKIYTAVGDEGGFSPPLEETREALDLIYTSINNAGYQGKIYMGMDAAASDFYDPKKEKYIIDGKELNPNQLLEFYLDLAKEYPIVYLEDPFEENSFDMFGELQNKLNSTIVTGDDLYTTNIKYLKIGIEKRSTKGVIVKPNQVGTISETFEFTNLARRNSIKLVTSHRSGETEDNFIAEFAVGIESDFIKTGAPARGERTSKYNKLLEIENKFGLEYGGKYFYL</sequence>
<accession>C3MUV2</accession>
<comment type="function">
    <text evidence="1">Catalyzes the reversible conversion of 2-phosphoglycerate (2-PG) into phosphoenolpyruvate (PEP). It is essential for the degradation of carbohydrates via glycolysis.</text>
</comment>
<comment type="catalytic activity">
    <reaction evidence="1">
        <text>(2R)-2-phosphoglycerate = phosphoenolpyruvate + H2O</text>
        <dbReference type="Rhea" id="RHEA:10164"/>
        <dbReference type="ChEBI" id="CHEBI:15377"/>
        <dbReference type="ChEBI" id="CHEBI:58289"/>
        <dbReference type="ChEBI" id="CHEBI:58702"/>
        <dbReference type="EC" id="4.2.1.11"/>
    </reaction>
</comment>
<comment type="cofactor">
    <cofactor evidence="1">
        <name>Mg(2+)</name>
        <dbReference type="ChEBI" id="CHEBI:18420"/>
    </cofactor>
    <text evidence="1">Binds a second Mg(2+) ion via substrate during catalysis.</text>
</comment>
<comment type="pathway">
    <text evidence="1">Carbohydrate degradation; glycolysis; pyruvate from D-glyceraldehyde 3-phosphate: step 4/5.</text>
</comment>
<comment type="subcellular location">
    <subcellularLocation>
        <location evidence="1">Cytoplasm</location>
    </subcellularLocation>
    <subcellularLocation>
        <location evidence="1">Secreted</location>
    </subcellularLocation>
    <subcellularLocation>
        <location evidence="1">Cell surface</location>
    </subcellularLocation>
    <text evidence="1">Fractions of enolase are present in both the cytoplasm and on the cell surface.</text>
</comment>
<comment type="similarity">
    <text evidence="1">Belongs to the enolase family.</text>
</comment>
<dbReference type="EC" id="4.2.1.11" evidence="1"/>
<dbReference type="EMBL" id="CP001400">
    <property type="protein sequence ID" value="ACP38062.1"/>
    <property type="molecule type" value="Genomic_DNA"/>
</dbReference>
<dbReference type="RefSeq" id="WP_012711313.1">
    <property type="nucleotide sequence ID" value="NC_012588.1"/>
</dbReference>
<dbReference type="SMR" id="C3MUV2"/>
<dbReference type="GeneID" id="84061620"/>
<dbReference type="KEGG" id="sia:M1425_1308"/>
<dbReference type="HOGENOM" id="CLU_031223_2_1_2"/>
<dbReference type="UniPathway" id="UPA00109">
    <property type="reaction ID" value="UER00187"/>
</dbReference>
<dbReference type="Proteomes" id="UP000001350">
    <property type="component" value="Chromosome"/>
</dbReference>
<dbReference type="GO" id="GO:0009986">
    <property type="term" value="C:cell surface"/>
    <property type="evidence" value="ECO:0007669"/>
    <property type="project" value="UniProtKB-SubCell"/>
</dbReference>
<dbReference type="GO" id="GO:0005576">
    <property type="term" value="C:extracellular region"/>
    <property type="evidence" value="ECO:0007669"/>
    <property type="project" value="UniProtKB-SubCell"/>
</dbReference>
<dbReference type="GO" id="GO:0000015">
    <property type="term" value="C:phosphopyruvate hydratase complex"/>
    <property type="evidence" value="ECO:0007669"/>
    <property type="project" value="InterPro"/>
</dbReference>
<dbReference type="GO" id="GO:0000287">
    <property type="term" value="F:magnesium ion binding"/>
    <property type="evidence" value="ECO:0007669"/>
    <property type="project" value="UniProtKB-UniRule"/>
</dbReference>
<dbReference type="GO" id="GO:0004634">
    <property type="term" value="F:phosphopyruvate hydratase activity"/>
    <property type="evidence" value="ECO:0007669"/>
    <property type="project" value="UniProtKB-UniRule"/>
</dbReference>
<dbReference type="GO" id="GO:0006096">
    <property type="term" value="P:glycolytic process"/>
    <property type="evidence" value="ECO:0007669"/>
    <property type="project" value="UniProtKB-UniRule"/>
</dbReference>
<dbReference type="CDD" id="cd03313">
    <property type="entry name" value="enolase"/>
    <property type="match status" value="1"/>
</dbReference>
<dbReference type="Gene3D" id="3.20.20.120">
    <property type="entry name" value="Enolase-like C-terminal domain"/>
    <property type="match status" value="1"/>
</dbReference>
<dbReference type="Gene3D" id="3.30.390.10">
    <property type="entry name" value="Enolase-like, N-terminal domain"/>
    <property type="match status" value="1"/>
</dbReference>
<dbReference type="HAMAP" id="MF_00318">
    <property type="entry name" value="Enolase"/>
    <property type="match status" value="1"/>
</dbReference>
<dbReference type="InterPro" id="IPR000941">
    <property type="entry name" value="Enolase"/>
</dbReference>
<dbReference type="InterPro" id="IPR036849">
    <property type="entry name" value="Enolase-like_C_sf"/>
</dbReference>
<dbReference type="InterPro" id="IPR029017">
    <property type="entry name" value="Enolase-like_N"/>
</dbReference>
<dbReference type="InterPro" id="IPR020810">
    <property type="entry name" value="Enolase_C"/>
</dbReference>
<dbReference type="InterPro" id="IPR020809">
    <property type="entry name" value="Enolase_CS"/>
</dbReference>
<dbReference type="InterPro" id="IPR020811">
    <property type="entry name" value="Enolase_N"/>
</dbReference>
<dbReference type="NCBIfam" id="TIGR01060">
    <property type="entry name" value="eno"/>
    <property type="match status" value="1"/>
</dbReference>
<dbReference type="PANTHER" id="PTHR11902">
    <property type="entry name" value="ENOLASE"/>
    <property type="match status" value="1"/>
</dbReference>
<dbReference type="PANTHER" id="PTHR11902:SF1">
    <property type="entry name" value="ENOLASE"/>
    <property type="match status" value="1"/>
</dbReference>
<dbReference type="Pfam" id="PF00113">
    <property type="entry name" value="Enolase_C"/>
    <property type="match status" value="1"/>
</dbReference>
<dbReference type="Pfam" id="PF03952">
    <property type="entry name" value="Enolase_N"/>
    <property type="match status" value="1"/>
</dbReference>
<dbReference type="PIRSF" id="PIRSF001400">
    <property type="entry name" value="Enolase"/>
    <property type="match status" value="1"/>
</dbReference>
<dbReference type="PRINTS" id="PR00148">
    <property type="entry name" value="ENOLASE"/>
</dbReference>
<dbReference type="SFLD" id="SFLDF00002">
    <property type="entry name" value="enolase"/>
    <property type="match status" value="1"/>
</dbReference>
<dbReference type="SFLD" id="SFLDG00178">
    <property type="entry name" value="enolase"/>
    <property type="match status" value="1"/>
</dbReference>
<dbReference type="SMART" id="SM01192">
    <property type="entry name" value="Enolase_C"/>
    <property type="match status" value="1"/>
</dbReference>
<dbReference type="SMART" id="SM01193">
    <property type="entry name" value="Enolase_N"/>
    <property type="match status" value="1"/>
</dbReference>
<dbReference type="SUPFAM" id="SSF51604">
    <property type="entry name" value="Enolase C-terminal domain-like"/>
    <property type="match status" value="1"/>
</dbReference>
<dbReference type="SUPFAM" id="SSF54826">
    <property type="entry name" value="Enolase N-terminal domain-like"/>
    <property type="match status" value="1"/>
</dbReference>
<dbReference type="PROSITE" id="PS00164">
    <property type="entry name" value="ENOLASE"/>
    <property type="match status" value="1"/>
</dbReference>
<gene>
    <name evidence="1" type="primary">eno</name>
    <name type="ordered locus">M1425_1308</name>
</gene>